<organism>
    <name type="scientific">Danio rerio</name>
    <name type="common">Zebrafish</name>
    <name type="synonym">Brachydanio rerio</name>
    <dbReference type="NCBI Taxonomy" id="7955"/>
    <lineage>
        <taxon>Eukaryota</taxon>
        <taxon>Metazoa</taxon>
        <taxon>Chordata</taxon>
        <taxon>Craniata</taxon>
        <taxon>Vertebrata</taxon>
        <taxon>Euteleostomi</taxon>
        <taxon>Actinopterygii</taxon>
        <taxon>Neopterygii</taxon>
        <taxon>Teleostei</taxon>
        <taxon>Ostariophysi</taxon>
        <taxon>Cypriniformes</taxon>
        <taxon>Danionidae</taxon>
        <taxon>Danioninae</taxon>
        <taxon>Danio</taxon>
    </lineage>
</organism>
<keyword id="KW-0472">Membrane</keyword>
<keyword id="KW-0496">Mitochondrion</keyword>
<keyword id="KW-0999">Mitochondrion inner membrane</keyword>
<keyword id="KW-1185">Reference proteome</keyword>
<keyword id="KW-0809">Transit peptide</keyword>
<reference key="1">
    <citation type="submission" date="2005-04" db="EMBL/GenBank/DDBJ databases">
        <authorList>
            <consortium name="NIH - Zebrafish Gene Collection (ZGC) project"/>
        </authorList>
    </citation>
    <scope>NUCLEOTIDE SEQUENCE [LARGE SCALE MRNA]</scope>
    <source>
        <tissue>Heart</tissue>
    </source>
</reference>
<protein>
    <recommendedName>
        <fullName>Coenzyme Q-binding protein COQ10 homolog B, mitochondrial</fullName>
    </recommendedName>
</protein>
<name>CQ10B_DANRE</name>
<gene>
    <name type="primary">coq10b</name>
    <name type="ORF">zgc:112103</name>
</gene>
<feature type="transit peptide" description="Mitochondrion" evidence="2">
    <location>
        <begin position="1"/>
        <end position="35"/>
    </location>
</feature>
<feature type="chain" id="PRO_0000228645" description="Coenzyme Q-binding protein COQ10 homolog B, mitochondrial">
    <location>
        <begin position="36"/>
        <end position="238"/>
    </location>
</feature>
<proteinExistence type="evidence at transcript level"/>
<sequence length="238" mass="27077">MARGSRCLRRAVAECIRNLPSTAGRETPGKSGVRYLSSCGILMTRAPPLFRAVSSRAVVAPARSFFNFAESSNKRKEYSERRIIGYSMQEMYEVVAKVEDYLLFVPWCKKSDVIFRRSGFCKAKLTVGFPPVVENYTSLVSTVRPHLVKASCSDGKLFNHLETVWRFSPGLPGYPRTCTLDFAISFEFRSLLHSQLATVFFDEVVKQMVSAFERRASKLYGPETQIPRELMFHEIHHT</sequence>
<evidence type="ECO:0000250" key="1"/>
<evidence type="ECO:0000255" key="2"/>
<evidence type="ECO:0000305" key="3"/>
<accession>Q567E6</accession>
<comment type="function">
    <text evidence="1">Required for the function of coenzyme Q in the respiratory chain. May serve as a chaperone or may be involved in the transport of Q6 from its site of synthesis to the catalytic sites of the respiratory complexes (By similarity).</text>
</comment>
<comment type="subunit">
    <text evidence="1">Interacts with coenzyme Q.</text>
</comment>
<comment type="subcellular location">
    <subcellularLocation>
        <location evidence="1">Mitochondrion inner membrane</location>
        <topology evidence="1">Peripheral membrane protein</topology>
        <orientation evidence="1">Matrix side</orientation>
    </subcellularLocation>
</comment>
<comment type="similarity">
    <text evidence="3">Belongs to the COQ10 family.</text>
</comment>
<dbReference type="EMBL" id="BC093204">
    <property type="protein sequence ID" value="AAH93204.1"/>
    <property type="molecule type" value="mRNA"/>
</dbReference>
<dbReference type="RefSeq" id="NP_001017747.1">
    <property type="nucleotide sequence ID" value="NM_001017747.1"/>
</dbReference>
<dbReference type="SMR" id="Q567E6"/>
<dbReference type="FunCoup" id="Q567E6">
    <property type="interactions" value="869"/>
</dbReference>
<dbReference type="STRING" id="7955.ENSDARP00000073037"/>
<dbReference type="PaxDb" id="7955-ENSDARP00000073037"/>
<dbReference type="GeneID" id="550442"/>
<dbReference type="KEGG" id="dre:550442"/>
<dbReference type="AGR" id="ZFIN:ZDB-GENE-050417-263"/>
<dbReference type="CTD" id="80219"/>
<dbReference type="ZFIN" id="ZDB-GENE-050417-263">
    <property type="gene designation" value="coq10b"/>
</dbReference>
<dbReference type="eggNOG" id="KOG3177">
    <property type="taxonomic scope" value="Eukaryota"/>
</dbReference>
<dbReference type="InParanoid" id="Q567E6"/>
<dbReference type="OrthoDB" id="292693at2759"/>
<dbReference type="PhylomeDB" id="Q567E6"/>
<dbReference type="Reactome" id="R-DRE-611105">
    <property type="pathway name" value="Respiratory electron transport"/>
</dbReference>
<dbReference type="Reactome" id="R-DRE-9864848">
    <property type="pathway name" value="Complex IV assembly"/>
</dbReference>
<dbReference type="PRO" id="PR:Q567E6"/>
<dbReference type="Proteomes" id="UP000000437">
    <property type="component" value="Chromosome 9"/>
</dbReference>
<dbReference type="GO" id="GO:0005743">
    <property type="term" value="C:mitochondrial inner membrane"/>
    <property type="evidence" value="ECO:0007669"/>
    <property type="project" value="UniProtKB-SubCell"/>
</dbReference>
<dbReference type="GO" id="GO:0005739">
    <property type="term" value="C:mitochondrion"/>
    <property type="evidence" value="ECO:0000318"/>
    <property type="project" value="GO_Central"/>
</dbReference>
<dbReference type="GO" id="GO:0048039">
    <property type="term" value="F:ubiquinone binding"/>
    <property type="evidence" value="ECO:0007669"/>
    <property type="project" value="InterPro"/>
</dbReference>
<dbReference type="GO" id="GO:0045333">
    <property type="term" value="P:cellular respiration"/>
    <property type="evidence" value="ECO:0007669"/>
    <property type="project" value="InterPro"/>
</dbReference>
<dbReference type="CDD" id="cd07813">
    <property type="entry name" value="COQ10p_like"/>
    <property type="match status" value="1"/>
</dbReference>
<dbReference type="FunFam" id="3.30.530.20:FF:000002">
    <property type="entry name" value="Coenzyme Q-binding protein COQ10 homolog, mitochondrial"/>
    <property type="match status" value="1"/>
</dbReference>
<dbReference type="Gene3D" id="3.30.530.20">
    <property type="match status" value="1"/>
</dbReference>
<dbReference type="InterPro" id="IPR044996">
    <property type="entry name" value="COQ10-like"/>
</dbReference>
<dbReference type="InterPro" id="IPR005031">
    <property type="entry name" value="COQ10_START"/>
</dbReference>
<dbReference type="InterPro" id="IPR023393">
    <property type="entry name" value="START-like_dom_sf"/>
</dbReference>
<dbReference type="PANTHER" id="PTHR12901:SF9">
    <property type="entry name" value="COENZYME Q-BINDING PROTEIN COQ10 HOMOLOG B, MITOCHONDRIAL"/>
    <property type="match status" value="1"/>
</dbReference>
<dbReference type="PANTHER" id="PTHR12901">
    <property type="entry name" value="SPERM PROTEIN HOMOLOG"/>
    <property type="match status" value="1"/>
</dbReference>
<dbReference type="Pfam" id="PF03364">
    <property type="entry name" value="Polyketide_cyc"/>
    <property type="match status" value="1"/>
</dbReference>
<dbReference type="SUPFAM" id="SSF55961">
    <property type="entry name" value="Bet v1-like"/>
    <property type="match status" value="1"/>
</dbReference>